<feature type="chain" id="PRO_1000123865" description="Serine--tRNA ligase">
    <location>
        <begin position="1"/>
        <end position="420"/>
    </location>
</feature>
<feature type="binding site" evidence="1">
    <location>
        <begin position="229"/>
        <end position="231"/>
    </location>
    <ligand>
        <name>L-serine</name>
        <dbReference type="ChEBI" id="CHEBI:33384"/>
    </ligand>
</feature>
<feature type="binding site" evidence="1">
    <location>
        <begin position="260"/>
        <end position="262"/>
    </location>
    <ligand>
        <name>ATP</name>
        <dbReference type="ChEBI" id="CHEBI:30616"/>
    </ligand>
</feature>
<feature type="binding site" evidence="1">
    <location>
        <position position="283"/>
    </location>
    <ligand>
        <name>L-serine</name>
        <dbReference type="ChEBI" id="CHEBI:33384"/>
    </ligand>
</feature>
<feature type="binding site" evidence="1">
    <location>
        <begin position="347"/>
        <end position="350"/>
    </location>
    <ligand>
        <name>ATP</name>
        <dbReference type="ChEBI" id="CHEBI:30616"/>
    </ligand>
</feature>
<feature type="binding site" evidence="1">
    <location>
        <position position="382"/>
    </location>
    <ligand>
        <name>L-serine</name>
        <dbReference type="ChEBI" id="CHEBI:33384"/>
    </ligand>
</feature>
<protein>
    <recommendedName>
        <fullName evidence="1">Serine--tRNA ligase</fullName>
        <ecNumber evidence="1">6.1.1.11</ecNumber>
    </recommendedName>
    <alternativeName>
        <fullName evidence="1">Seryl-tRNA synthetase</fullName>
        <shortName evidence="1">SerRS</shortName>
    </alternativeName>
    <alternativeName>
        <fullName evidence="1">Seryl-tRNA(Ser/Sec) synthetase</fullName>
    </alternativeName>
</protein>
<gene>
    <name evidence="1" type="primary">serS</name>
    <name type="ordered locus">Athe_0872</name>
</gene>
<name>SYS_CALBD</name>
<accession>B9MQM8</accession>
<sequence>MLDLKYIRANPEKVQEGLSKRNKDVSIAPILELDERRRKLLAEVESLKALQNQKSKEVPKLKKEGKDVTDLMNELKDLSDKIKELDSKVKEVEDEIEKILLTIPNIPHESVPVGKDDTENVEVRRWGEVREPDFEIKPHWEIGVNLGILDFERASKVSGSRFTFYRGLGARLERALINFMLDLHIEKHGYTELFPPFLVARKSMIGTGQLPKFEEDAFKTTDDYFLIPTAEVPVTNYHREEILKEEDLPIKYVAYSACFRAEAGAAGKDTRGLIRQHQFNKVELVKFTKPEDSYDELEKLTADAEDVLKELGLPYRVVLLCSGDLGFSSAKTYDIEVWMPSYGRYVEISSCSNFENYQARRANIRFRRKDGKLDYVHTLNGSGLAVGRTLAAILENFQQKDGTVVVPEVLRKYMGTDVIK</sequence>
<comment type="function">
    <text evidence="1">Catalyzes the attachment of serine to tRNA(Ser). Is also able to aminoacylate tRNA(Sec) with serine, to form the misacylated tRNA L-seryl-tRNA(Sec), which will be further converted into selenocysteinyl-tRNA(Sec).</text>
</comment>
<comment type="catalytic activity">
    <reaction evidence="1">
        <text>tRNA(Ser) + L-serine + ATP = L-seryl-tRNA(Ser) + AMP + diphosphate + H(+)</text>
        <dbReference type="Rhea" id="RHEA:12292"/>
        <dbReference type="Rhea" id="RHEA-COMP:9669"/>
        <dbReference type="Rhea" id="RHEA-COMP:9703"/>
        <dbReference type="ChEBI" id="CHEBI:15378"/>
        <dbReference type="ChEBI" id="CHEBI:30616"/>
        <dbReference type="ChEBI" id="CHEBI:33019"/>
        <dbReference type="ChEBI" id="CHEBI:33384"/>
        <dbReference type="ChEBI" id="CHEBI:78442"/>
        <dbReference type="ChEBI" id="CHEBI:78533"/>
        <dbReference type="ChEBI" id="CHEBI:456215"/>
        <dbReference type="EC" id="6.1.1.11"/>
    </reaction>
</comment>
<comment type="catalytic activity">
    <reaction evidence="1">
        <text>tRNA(Sec) + L-serine + ATP = L-seryl-tRNA(Sec) + AMP + diphosphate + H(+)</text>
        <dbReference type="Rhea" id="RHEA:42580"/>
        <dbReference type="Rhea" id="RHEA-COMP:9742"/>
        <dbReference type="Rhea" id="RHEA-COMP:10128"/>
        <dbReference type="ChEBI" id="CHEBI:15378"/>
        <dbReference type="ChEBI" id="CHEBI:30616"/>
        <dbReference type="ChEBI" id="CHEBI:33019"/>
        <dbReference type="ChEBI" id="CHEBI:33384"/>
        <dbReference type="ChEBI" id="CHEBI:78442"/>
        <dbReference type="ChEBI" id="CHEBI:78533"/>
        <dbReference type="ChEBI" id="CHEBI:456215"/>
        <dbReference type="EC" id="6.1.1.11"/>
    </reaction>
</comment>
<comment type="pathway">
    <text evidence="1">Aminoacyl-tRNA biosynthesis; selenocysteinyl-tRNA(Sec) biosynthesis; L-seryl-tRNA(Sec) from L-serine and tRNA(Sec): step 1/1.</text>
</comment>
<comment type="subunit">
    <text evidence="1">Homodimer. The tRNA molecule binds across the dimer.</text>
</comment>
<comment type="subcellular location">
    <subcellularLocation>
        <location evidence="1">Cytoplasm</location>
    </subcellularLocation>
</comment>
<comment type="domain">
    <text evidence="1">Consists of two distinct domains, a catalytic core and a N-terminal extension that is involved in tRNA binding.</text>
</comment>
<comment type="similarity">
    <text evidence="1">Belongs to the class-II aminoacyl-tRNA synthetase family. Type-1 seryl-tRNA synthetase subfamily.</text>
</comment>
<proteinExistence type="inferred from homology"/>
<reference key="1">
    <citation type="submission" date="2009-01" db="EMBL/GenBank/DDBJ databases">
        <title>Complete sequence of chromosome of Caldicellulosiruptor becscii DSM 6725.</title>
        <authorList>
            <person name="Lucas S."/>
            <person name="Copeland A."/>
            <person name="Lapidus A."/>
            <person name="Glavina del Rio T."/>
            <person name="Tice H."/>
            <person name="Bruce D."/>
            <person name="Goodwin L."/>
            <person name="Pitluck S."/>
            <person name="Sims D."/>
            <person name="Meincke L."/>
            <person name="Brettin T."/>
            <person name="Detter J.C."/>
            <person name="Han C."/>
            <person name="Larimer F."/>
            <person name="Land M."/>
            <person name="Hauser L."/>
            <person name="Kyrpides N."/>
            <person name="Ovchinnikova G."/>
            <person name="Kataeva I."/>
            <person name="Adams M.W.W."/>
        </authorList>
    </citation>
    <scope>NUCLEOTIDE SEQUENCE [LARGE SCALE GENOMIC DNA]</scope>
    <source>
        <strain>ATCC BAA-1888 / DSM 6725 / KCTC 15123 / Z-1320</strain>
    </source>
</reference>
<dbReference type="EC" id="6.1.1.11" evidence="1"/>
<dbReference type="EMBL" id="CP001393">
    <property type="protein sequence ID" value="ACM59982.1"/>
    <property type="molecule type" value="Genomic_DNA"/>
</dbReference>
<dbReference type="RefSeq" id="WP_015907409.1">
    <property type="nucleotide sequence ID" value="NC_012034.1"/>
</dbReference>
<dbReference type="SMR" id="B9MQM8"/>
<dbReference type="STRING" id="521460.Athe_0872"/>
<dbReference type="GeneID" id="31772228"/>
<dbReference type="KEGG" id="ate:Athe_0872"/>
<dbReference type="eggNOG" id="COG0172">
    <property type="taxonomic scope" value="Bacteria"/>
</dbReference>
<dbReference type="HOGENOM" id="CLU_023797_1_1_9"/>
<dbReference type="UniPathway" id="UPA00906">
    <property type="reaction ID" value="UER00895"/>
</dbReference>
<dbReference type="Proteomes" id="UP000007723">
    <property type="component" value="Chromosome"/>
</dbReference>
<dbReference type="GO" id="GO:0005737">
    <property type="term" value="C:cytoplasm"/>
    <property type="evidence" value="ECO:0007669"/>
    <property type="project" value="UniProtKB-SubCell"/>
</dbReference>
<dbReference type="GO" id="GO:0005524">
    <property type="term" value="F:ATP binding"/>
    <property type="evidence" value="ECO:0007669"/>
    <property type="project" value="UniProtKB-UniRule"/>
</dbReference>
<dbReference type="GO" id="GO:0140096">
    <property type="term" value="F:catalytic activity, acting on a protein"/>
    <property type="evidence" value="ECO:0007669"/>
    <property type="project" value="UniProtKB-ARBA"/>
</dbReference>
<dbReference type="GO" id="GO:0004828">
    <property type="term" value="F:serine-tRNA ligase activity"/>
    <property type="evidence" value="ECO:0007669"/>
    <property type="project" value="UniProtKB-UniRule"/>
</dbReference>
<dbReference type="GO" id="GO:0016740">
    <property type="term" value="F:transferase activity"/>
    <property type="evidence" value="ECO:0007669"/>
    <property type="project" value="UniProtKB-ARBA"/>
</dbReference>
<dbReference type="GO" id="GO:0016260">
    <property type="term" value="P:selenocysteine biosynthetic process"/>
    <property type="evidence" value="ECO:0007669"/>
    <property type="project" value="UniProtKB-UniRule"/>
</dbReference>
<dbReference type="GO" id="GO:0006434">
    <property type="term" value="P:seryl-tRNA aminoacylation"/>
    <property type="evidence" value="ECO:0007669"/>
    <property type="project" value="UniProtKB-UniRule"/>
</dbReference>
<dbReference type="CDD" id="cd00770">
    <property type="entry name" value="SerRS_core"/>
    <property type="match status" value="1"/>
</dbReference>
<dbReference type="Gene3D" id="3.30.930.10">
    <property type="entry name" value="Bira Bifunctional Protein, Domain 2"/>
    <property type="match status" value="1"/>
</dbReference>
<dbReference type="Gene3D" id="1.10.287.40">
    <property type="entry name" value="Serine-tRNA synthetase, tRNA binding domain"/>
    <property type="match status" value="1"/>
</dbReference>
<dbReference type="HAMAP" id="MF_00176">
    <property type="entry name" value="Ser_tRNA_synth_type1"/>
    <property type="match status" value="1"/>
</dbReference>
<dbReference type="InterPro" id="IPR002314">
    <property type="entry name" value="aa-tRNA-synt_IIb"/>
</dbReference>
<dbReference type="InterPro" id="IPR006195">
    <property type="entry name" value="aa-tRNA-synth_II"/>
</dbReference>
<dbReference type="InterPro" id="IPR045864">
    <property type="entry name" value="aa-tRNA-synth_II/BPL/LPL"/>
</dbReference>
<dbReference type="InterPro" id="IPR002317">
    <property type="entry name" value="Ser-tRNA-ligase_type_1"/>
</dbReference>
<dbReference type="InterPro" id="IPR015866">
    <property type="entry name" value="Ser-tRNA-synth_1_N"/>
</dbReference>
<dbReference type="InterPro" id="IPR042103">
    <property type="entry name" value="SerRS_1_N_sf"/>
</dbReference>
<dbReference type="InterPro" id="IPR033729">
    <property type="entry name" value="SerRS_core"/>
</dbReference>
<dbReference type="InterPro" id="IPR010978">
    <property type="entry name" value="tRNA-bd_arm"/>
</dbReference>
<dbReference type="NCBIfam" id="TIGR00414">
    <property type="entry name" value="serS"/>
    <property type="match status" value="1"/>
</dbReference>
<dbReference type="PANTHER" id="PTHR43697:SF1">
    <property type="entry name" value="SERINE--TRNA LIGASE"/>
    <property type="match status" value="1"/>
</dbReference>
<dbReference type="PANTHER" id="PTHR43697">
    <property type="entry name" value="SERYL-TRNA SYNTHETASE"/>
    <property type="match status" value="1"/>
</dbReference>
<dbReference type="Pfam" id="PF02403">
    <property type="entry name" value="Seryl_tRNA_N"/>
    <property type="match status" value="1"/>
</dbReference>
<dbReference type="Pfam" id="PF00587">
    <property type="entry name" value="tRNA-synt_2b"/>
    <property type="match status" value="1"/>
</dbReference>
<dbReference type="PIRSF" id="PIRSF001529">
    <property type="entry name" value="Ser-tRNA-synth_IIa"/>
    <property type="match status" value="1"/>
</dbReference>
<dbReference type="PRINTS" id="PR00981">
    <property type="entry name" value="TRNASYNTHSER"/>
</dbReference>
<dbReference type="SUPFAM" id="SSF55681">
    <property type="entry name" value="Class II aaRS and biotin synthetases"/>
    <property type="match status" value="1"/>
</dbReference>
<dbReference type="SUPFAM" id="SSF46589">
    <property type="entry name" value="tRNA-binding arm"/>
    <property type="match status" value="1"/>
</dbReference>
<dbReference type="PROSITE" id="PS50862">
    <property type="entry name" value="AA_TRNA_LIGASE_II"/>
    <property type="match status" value="1"/>
</dbReference>
<keyword id="KW-0030">Aminoacyl-tRNA synthetase</keyword>
<keyword id="KW-0067">ATP-binding</keyword>
<keyword id="KW-0963">Cytoplasm</keyword>
<keyword id="KW-0436">Ligase</keyword>
<keyword id="KW-0547">Nucleotide-binding</keyword>
<keyword id="KW-0648">Protein biosynthesis</keyword>
<evidence type="ECO:0000255" key="1">
    <source>
        <dbReference type="HAMAP-Rule" id="MF_00176"/>
    </source>
</evidence>
<organism>
    <name type="scientific">Caldicellulosiruptor bescii (strain ATCC BAA-1888 / DSM 6725 / KCTC 15123 / Z-1320)</name>
    <name type="common">Anaerocellum thermophilum</name>
    <dbReference type="NCBI Taxonomy" id="521460"/>
    <lineage>
        <taxon>Bacteria</taxon>
        <taxon>Bacillati</taxon>
        <taxon>Bacillota</taxon>
        <taxon>Bacillota incertae sedis</taxon>
        <taxon>Caldicellulosiruptorales</taxon>
        <taxon>Caldicellulosiruptoraceae</taxon>
        <taxon>Caldicellulosiruptor</taxon>
    </lineage>
</organism>